<evidence type="ECO:0000250" key="1"/>
<evidence type="ECO:0000250" key="2">
    <source>
        <dbReference type="UniProtKB" id="P14324"/>
    </source>
</evidence>
<evidence type="ECO:0000250" key="3">
    <source>
        <dbReference type="UniProtKB" id="Q12051"/>
    </source>
</evidence>
<evidence type="ECO:0000269" key="4">
    <source>
    </source>
</evidence>
<evidence type="ECO:0000269" key="5">
    <source>
    </source>
</evidence>
<evidence type="ECO:0000269" key="6">
    <source>
    </source>
</evidence>
<evidence type="ECO:0000269" key="7">
    <source>
    </source>
</evidence>
<evidence type="ECO:0000303" key="8">
    <source>
    </source>
</evidence>
<evidence type="ECO:0000305" key="9"/>
<evidence type="ECO:0007744" key="10">
    <source>
    </source>
</evidence>
<evidence type="ECO:0007829" key="11">
    <source>
        <dbReference type="PDB" id="2Q80"/>
    </source>
</evidence>
<evidence type="ECO:0007829" key="12">
    <source>
        <dbReference type="PDB" id="6G32"/>
    </source>
</evidence>
<evidence type="ECO:0007829" key="13">
    <source>
        <dbReference type="PDB" id="6R4V"/>
    </source>
</evidence>
<dbReference type="EC" id="2.5.1.-"/>
<dbReference type="EC" id="2.5.1.1"/>
<dbReference type="EC" id="2.5.1.29"/>
<dbReference type="EC" id="2.5.1.10"/>
<dbReference type="EMBL" id="AB017971">
    <property type="protein sequence ID" value="BAA75909.1"/>
    <property type="molecule type" value="mRNA"/>
</dbReference>
<dbReference type="EMBL" id="AB019036">
    <property type="protein sequence ID" value="BAA77251.1"/>
    <property type="molecule type" value="mRNA"/>
</dbReference>
<dbReference type="EMBL" id="AF125394">
    <property type="protein sequence ID" value="AAD43050.1"/>
    <property type="molecule type" value="mRNA"/>
</dbReference>
<dbReference type="EMBL" id="AB016043">
    <property type="protein sequence ID" value="BAA76511.1"/>
    <property type="molecule type" value="mRNA"/>
</dbReference>
<dbReference type="EMBL" id="AF057698">
    <property type="protein sequence ID" value="AAG45581.1"/>
    <property type="molecule type" value="mRNA"/>
</dbReference>
<dbReference type="EMBL" id="AK293278">
    <property type="protein sequence ID" value="BAH11480.1"/>
    <property type="molecule type" value="mRNA"/>
</dbReference>
<dbReference type="EMBL" id="AL391994">
    <property type="status" value="NOT_ANNOTATED_CDS"/>
    <property type="molecule type" value="Genomic_DNA"/>
</dbReference>
<dbReference type="EMBL" id="CH471098">
    <property type="protein sequence ID" value="EAW70018.1"/>
    <property type="molecule type" value="Genomic_DNA"/>
</dbReference>
<dbReference type="EMBL" id="CH471098">
    <property type="protein sequence ID" value="EAW70020.1"/>
    <property type="molecule type" value="Genomic_DNA"/>
</dbReference>
<dbReference type="EMBL" id="BC005252">
    <property type="protein sequence ID" value="AAH05252.1"/>
    <property type="molecule type" value="mRNA"/>
</dbReference>
<dbReference type="EMBL" id="BC067768">
    <property type="protein sequence ID" value="AAH67768.1"/>
    <property type="molecule type" value="mRNA"/>
</dbReference>
<dbReference type="CCDS" id="CCDS1604.1">
    <molecule id="O95749-1"/>
</dbReference>
<dbReference type="RefSeq" id="NP_001032354.1">
    <molecule id="O95749-1"/>
    <property type="nucleotide sequence ID" value="NM_001037277.1"/>
</dbReference>
<dbReference type="RefSeq" id="NP_001032355.1">
    <molecule id="O95749-2"/>
    <property type="nucleotide sequence ID" value="NM_001037278.2"/>
</dbReference>
<dbReference type="RefSeq" id="NP_001358406.1">
    <molecule id="O95749-1"/>
    <property type="nucleotide sequence ID" value="NM_001371477.1"/>
</dbReference>
<dbReference type="RefSeq" id="NP_001358407.1">
    <molecule id="O95749-1"/>
    <property type="nucleotide sequence ID" value="NM_001371478.1"/>
</dbReference>
<dbReference type="RefSeq" id="NP_004828.1">
    <molecule id="O95749-1"/>
    <property type="nucleotide sequence ID" value="NM_004837.4"/>
</dbReference>
<dbReference type="PDB" id="2Q80">
    <property type="method" value="X-ray"/>
    <property type="resolution" value="2.70 A"/>
    <property type="chains" value="A/B/C/D/E/F=1-300"/>
</dbReference>
<dbReference type="PDB" id="6C56">
    <property type="method" value="X-ray"/>
    <property type="resolution" value="2.80 A"/>
    <property type="chains" value="A/B=1-300"/>
</dbReference>
<dbReference type="PDB" id="6C57">
    <property type="method" value="X-ray"/>
    <property type="resolution" value="3.50 A"/>
    <property type="chains" value="A/B=1-300"/>
</dbReference>
<dbReference type="PDB" id="6G31">
    <property type="method" value="X-ray"/>
    <property type="resolution" value="3.00 A"/>
    <property type="chains" value="A/B/C/D/E/F/G/H/I/J/K/L=1-300"/>
</dbReference>
<dbReference type="PDB" id="6G32">
    <property type="method" value="X-ray"/>
    <property type="resolution" value="3.28 A"/>
    <property type="chains" value="A/B/C/D/E/F=1-300"/>
</dbReference>
<dbReference type="PDB" id="6R4V">
    <property type="method" value="X-ray"/>
    <property type="resolution" value="2.20 A"/>
    <property type="chains" value="A/B/C/D/E/F=1-300"/>
</dbReference>
<dbReference type="PDB" id="9CSL">
    <property type="method" value="X-ray"/>
    <property type="resolution" value="2.10 A"/>
    <property type="chains" value="A/B=1-300"/>
</dbReference>
<dbReference type="PDBsum" id="2Q80"/>
<dbReference type="PDBsum" id="6C56"/>
<dbReference type="PDBsum" id="6C57"/>
<dbReference type="PDBsum" id="6G31"/>
<dbReference type="PDBsum" id="6G32"/>
<dbReference type="PDBsum" id="6R4V"/>
<dbReference type="PDBsum" id="9CSL"/>
<dbReference type="SMR" id="O95749"/>
<dbReference type="BioGRID" id="114842">
    <property type="interactions" value="77"/>
</dbReference>
<dbReference type="FunCoup" id="O95749">
    <property type="interactions" value="3033"/>
</dbReference>
<dbReference type="IntAct" id="O95749">
    <property type="interactions" value="45"/>
</dbReference>
<dbReference type="STRING" id="9606.ENSP00000282841"/>
<dbReference type="BindingDB" id="O95749"/>
<dbReference type="ChEMBL" id="CHEMBL4769"/>
<dbReference type="DrugBank" id="DB06830">
    <property type="generic name" value="(1-HYDROXYHEPTANE-1,1-DIYL)BIS(PHOSPHONIC ACID)"/>
</dbReference>
<dbReference type="DrugBank" id="DB06931">
    <property type="generic name" value="(1-HYDROXYNONANE-1,1-DIYL)BIS(PHOSPHONIC ACID)"/>
</dbReference>
<dbReference type="DrugBank" id="DB07221">
    <property type="generic name" value="(2,2-DIPHOSPHONOETHYL)(DODECYL)DIMETHYLPHOSPHONIUM"/>
</dbReference>
<dbReference type="DrugBank" id="DB08529">
    <property type="generic name" value="(6E,11E)-HEPTADECA-6,11-DIENE-9,9-DIYLBIS(PHOSPHONIC ACID)"/>
</dbReference>
<dbReference type="DrugBank" id="DB07410">
    <property type="generic name" value="[2-(3-DIBENZOFURAN-4-YL-PHENYL)-1-HYDROXY-1-PHOSPHONO-ETHYL]-PHOSPHONIC ACID"/>
</dbReference>
<dbReference type="DrugBank" id="DB07780">
    <property type="generic name" value="Farnesyl diphosphate"/>
</dbReference>
<dbReference type="DrugBank" id="DB04695">
    <property type="generic name" value="Farnesyl thiopyrophosphate"/>
</dbReference>
<dbReference type="DrugBank" id="DB02552">
    <property type="generic name" value="Geranyl Diphosphate"/>
</dbReference>
<dbReference type="DrugBank" id="DB07841">
    <property type="generic name" value="Geranylgeranyl diphosphate"/>
</dbReference>
<dbReference type="DrugBank" id="DB00710">
    <property type="generic name" value="Ibandronate"/>
</dbReference>
<dbReference type="DrugBank" id="DB04714">
    <property type="generic name" value="ISOPENTENYL PYROPHOSPHATE"/>
</dbReference>
<dbReference type="DrugBank" id="DB07873">
    <property type="generic name" value="Lauryl alcohol diphosphonic acid"/>
</dbReference>
<dbReference type="DrugBank" id="DB06548">
    <property type="generic name" value="Minodronic acid"/>
</dbReference>
<dbReference type="DrugBank" id="DB00282">
    <property type="generic name" value="Pamidronic acid"/>
</dbReference>
<dbReference type="DrugBank" id="DB00399">
    <property type="generic name" value="Zoledronic acid"/>
</dbReference>
<dbReference type="DrugCentral" id="O95749"/>
<dbReference type="GuidetoPHARMACOLOGY" id="643"/>
<dbReference type="SwissLipids" id="SLP:000001316">
    <molecule id="O95749-1"/>
</dbReference>
<dbReference type="iPTMnet" id="O95749"/>
<dbReference type="PhosphoSitePlus" id="O95749"/>
<dbReference type="BioMuta" id="GGPS1"/>
<dbReference type="jPOST" id="O95749"/>
<dbReference type="MassIVE" id="O95749"/>
<dbReference type="PaxDb" id="9606-ENSP00000282841"/>
<dbReference type="PeptideAtlas" id="O95749"/>
<dbReference type="ProteomicsDB" id="2198"/>
<dbReference type="ProteomicsDB" id="51020">
    <molecule id="O95749-1"/>
</dbReference>
<dbReference type="Pumba" id="O95749"/>
<dbReference type="Antibodypedia" id="34695">
    <property type="antibodies" value="445 antibodies from 30 providers"/>
</dbReference>
<dbReference type="DNASU" id="9453"/>
<dbReference type="Ensembl" id="ENST00000282841.9">
    <molecule id="O95749-1"/>
    <property type="protein sequence ID" value="ENSP00000282841.5"/>
    <property type="gene ID" value="ENSG00000152904.11"/>
</dbReference>
<dbReference type="Ensembl" id="ENST00000358966.6">
    <molecule id="O95749-1"/>
    <property type="protein sequence ID" value="ENSP00000351852.2"/>
    <property type="gene ID" value="ENSG00000152904.11"/>
</dbReference>
<dbReference type="Ensembl" id="ENST00000391855.2">
    <molecule id="O95749-2"/>
    <property type="protein sequence ID" value="ENSP00000375728.2"/>
    <property type="gene ID" value="ENSG00000152904.11"/>
</dbReference>
<dbReference type="Ensembl" id="ENST00000488594.5">
    <molecule id="O95749-1"/>
    <property type="protein sequence ID" value="ENSP00000418690.1"/>
    <property type="gene ID" value="ENSG00000152904.11"/>
</dbReference>
<dbReference type="GeneID" id="9453"/>
<dbReference type="KEGG" id="hsa:9453"/>
<dbReference type="MANE-Select" id="ENST00000282841.9">
    <property type="protein sequence ID" value="ENSP00000282841.5"/>
    <property type="RefSeq nucleotide sequence ID" value="NM_004837.4"/>
    <property type="RefSeq protein sequence ID" value="NP_004828.1"/>
</dbReference>
<dbReference type="UCSC" id="uc001hwv.4">
    <molecule id="O95749-1"/>
    <property type="organism name" value="human"/>
</dbReference>
<dbReference type="AGR" id="HGNC:4249"/>
<dbReference type="CTD" id="9453"/>
<dbReference type="DisGeNET" id="9453"/>
<dbReference type="GeneCards" id="GGPS1"/>
<dbReference type="HGNC" id="HGNC:4249">
    <property type="gene designation" value="GGPS1"/>
</dbReference>
<dbReference type="HPA" id="ENSG00000152904">
    <property type="expression patterns" value="Low tissue specificity"/>
</dbReference>
<dbReference type="MalaCards" id="GGPS1"/>
<dbReference type="MIM" id="606982">
    <property type="type" value="gene"/>
</dbReference>
<dbReference type="MIM" id="619518">
    <property type="type" value="phenotype"/>
</dbReference>
<dbReference type="neXtProt" id="NX_O95749"/>
<dbReference type="OpenTargets" id="ENSG00000152904"/>
<dbReference type="Orphanet" id="642945">
    <property type="disease" value="Perrault syndrome type 1"/>
</dbReference>
<dbReference type="Orphanet" id="642976">
    <property type="disease" value="Perrault syndrome type 2"/>
</dbReference>
<dbReference type="PharmGKB" id="PA28661"/>
<dbReference type="VEuPathDB" id="HostDB:ENSG00000152904"/>
<dbReference type="eggNOG" id="KOG0777">
    <property type="taxonomic scope" value="Eukaryota"/>
</dbReference>
<dbReference type="GeneTree" id="ENSGT00940000153498"/>
<dbReference type="InParanoid" id="O95749"/>
<dbReference type="OMA" id="FYSKAFF"/>
<dbReference type="OrthoDB" id="6921389at2759"/>
<dbReference type="PAN-GO" id="O95749">
    <property type="GO annotations" value="2 GO annotations based on evolutionary models"/>
</dbReference>
<dbReference type="PhylomeDB" id="O95749"/>
<dbReference type="TreeFam" id="TF300101"/>
<dbReference type="BioCyc" id="MetaCyc:HS07859-MONOMER"/>
<dbReference type="BRENDA" id="2.5.1.29">
    <property type="organism ID" value="2681"/>
</dbReference>
<dbReference type="PathwayCommons" id="O95749"/>
<dbReference type="Reactome" id="R-HSA-191273">
    <property type="pathway name" value="Cholesterol biosynthesis"/>
</dbReference>
<dbReference type="Reactome" id="R-HSA-2426168">
    <property type="pathway name" value="Activation of gene expression by SREBF (SREBP)"/>
</dbReference>
<dbReference type="SABIO-RK" id="O95749"/>
<dbReference type="SignaLink" id="O95749"/>
<dbReference type="UniPathway" id="UPA00259">
    <property type="reaction ID" value="UER00368"/>
</dbReference>
<dbReference type="UniPathway" id="UPA00260">
    <property type="reaction ID" value="UER00369"/>
</dbReference>
<dbReference type="UniPathway" id="UPA00389">
    <property type="reaction ID" value="UER00564"/>
</dbReference>
<dbReference type="BioGRID-ORCS" id="9453">
    <property type="hits" value="750 hits in 1133 CRISPR screens"/>
</dbReference>
<dbReference type="ChiTaRS" id="GGPS1">
    <property type="organism name" value="human"/>
</dbReference>
<dbReference type="EvolutionaryTrace" id="O95749"/>
<dbReference type="GeneWiki" id="GGPS1"/>
<dbReference type="GenomeRNAi" id="9453"/>
<dbReference type="Pharos" id="O95749">
    <property type="development level" value="Tchem"/>
</dbReference>
<dbReference type="PRO" id="PR:O95749"/>
<dbReference type="Proteomes" id="UP000005640">
    <property type="component" value="Chromosome 1"/>
</dbReference>
<dbReference type="RNAct" id="O95749">
    <property type="molecule type" value="protein"/>
</dbReference>
<dbReference type="Bgee" id="ENSG00000152904">
    <property type="expression patterns" value="Expressed in sperm and 210 other cell types or tissues"/>
</dbReference>
<dbReference type="ExpressionAtlas" id="O95749">
    <property type="expression patterns" value="baseline and differential"/>
</dbReference>
<dbReference type="GO" id="GO:0005737">
    <property type="term" value="C:cytoplasm"/>
    <property type="evidence" value="ECO:0000315"/>
    <property type="project" value="UniProtKB"/>
</dbReference>
<dbReference type="GO" id="GO:0005829">
    <property type="term" value="C:cytosol"/>
    <property type="evidence" value="ECO:0000314"/>
    <property type="project" value="HPA"/>
</dbReference>
<dbReference type="GO" id="GO:0005654">
    <property type="term" value="C:nucleoplasm"/>
    <property type="evidence" value="ECO:0000314"/>
    <property type="project" value="HPA"/>
</dbReference>
<dbReference type="GO" id="GO:0048471">
    <property type="term" value="C:perinuclear region of cytoplasm"/>
    <property type="evidence" value="ECO:0000315"/>
    <property type="project" value="UniProtKB"/>
</dbReference>
<dbReference type="GO" id="GO:0030018">
    <property type="term" value="C:Z disc"/>
    <property type="evidence" value="ECO:0000315"/>
    <property type="project" value="UniProtKB"/>
</dbReference>
<dbReference type="GO" id="GO:0004337">
    <property type="term" value="F:(2E,6E)-farnesyl diphosphate synthase activity"/>
    <property type="evidence" value="ECO:0007669"/>
    <property type="project" value="UniProtKB-EC"/>
</dbReference>
<dbReference type="GO" id="GO:0004161">
    <property type="term" value="F:dimethylallyltranstransferase activity"/>
    <property type="evidence" value="ECO:0007669"/>
    <property type="project" value="UniProtKB-EC"/>
</dbReference>
<dbReference type="GO" id="GO:0004311">
    <property type="term" value="F:geranylgeranyl diphosphate synthase activity"/>
    <property type="evidence" value="ECO:0000314"/>
    <property type="project" value="UniProtKB"/>
</dbReference>
<dbReference type="GO" id="GO:0042802">
    <property type="term" value="F:identical protein binding"/>
    <property type="evidence" value="ECO:0000353"/>
    <property type="project" value="IntAct"/>
</dbReference>
<dbReference type="GO" id="GO:0046872">
    <property type="term" value="F:metal ion binding"/>
    <property type="evidence" value="ECO:0007669"/>
    <property type="project" value="UniProtKB-KW"/>
</dbReference>
<dbReference type="GO" id="GO:0045337">
    <property type="term" value="P:farnesyl diphosphate biosynthetic process"/>
    <property type="evidence" value="ECO:0007669"/>
    <property type="project" value="UniProtKB-UniPathway"/>
</dbReference>
<dbReference type="GO" id="GO:0033384">
    <property type="term" value="P:geranyl diphosphate biosynthetic process"/>
    <property type="evidence" value="ECO:0007669"/>
    <property type="project" value="UniProtKB-UniPathway"/>
</dbReference>
<dbReference type="GO" id="GO:0033386">
    <property type="term" value="P:geranylgeranyl diphosphate biosynthetic process"/>
    <property type="evidence" value="ECO:0007669"/>
    <property type="project" value="UniProtKB-UniPathway"/>
</dbReference>
<dbReference type="GO" id="GO:0008299">
    <property type="term" value="P:isoprenoid biosynthetic process"/>
    <property type="evidence" value="ECO:0000318"/>
    <property type="project" value="GO_Central"/>
</dbReference>
<dbReference type="GO" id="GO:0006720">
    <property type="term" value="P:isoprenoid metabolic process"/>
    <property type="evidence" value="ECO:0000314"/>
    <property type="project" value="UniProtKB"/>
</dbReference>
<dbReference type="CDD" id="cd00685">
    <property type="entry name" value="Trans_IPPS_HT"/>
    <property type="match status" value="1"/>
</dbReference>
<dbReference type="FunFam" id="1.10.600.10:FF:000009">
    <property type="entry name" value="Geranylgeranyl pyrophosphate synthase"/>
    <property type="match status" value="1"/>
</dbReference>
<dbReference type="Gene3D" id="1.10.600.10">
    <property type="entry name" value="Farnesyl Diphosphate Synthase"/>
    <property type="match status" value="1"/>
</dbReference>
<dbReference type="InterPro" id="IPR008949">
    <property type="entry name" value="Isoprenoid_synthase_dom_sf"/>
</dbReference>
<dbReference type="InterPro" id="IPR000092">
    <property type="entry name" value="Polyprenyl_synt"/>
</dbReference>
<dbReference type="InterPro" id="IPR033749">
    <property type="entry name" value="Polyprenyl_synt_CS"/>
</dbReference>
<dbReference type="PANTHER" id="PTHR12001">
    <property type="entry name" value="GERANYLGERANYL PYROPHOSPHATE SYNTHASE"/>
    <property type="match status" value="1"/>
</dbReference>
<dbReference type="PANTHER" id="PTHR12001:SF44">
    <property type="entry name" value="GERANYLGERANYL PYROPHOSPHATE SYNTHASE"/>
    <property type="match status" value="1"/>
</dbReference>
<dbReference type="Pfam" id="PF00348">
    <property type="entry name" value="polyprenyl_synt"/>
    <property type="match status" value="1"/>
</dbReference>
<dbReference type="SFLD" id="SFLDS00005">
    <property type="entry name" value="Isoprenoid_Synthase_Type_I"/>
    <property type="match status" value="1"/>
</dbReference>
<dbReference type="SFLD" id="SFLDG01017">
    <property type="entry name" value="Polyprenyl_Transferase_Like"/>
    <property type="match status" value="1"/>
</dbReference>
<dbReference type="SUPFAM" id="SSF48576">
    <property type="entry name" value="Terpenoid synthases"/>
    <property type="match status" value="1"/>
</dbReference>
<dbReference type="PROSITE" id="PS00723">
    <property type="entry name" value="POLYPRENYL_SYNTHASE_1"/>
    <property type="match status" value="1"/>
</dbReference>
<dbReference type="PROSITE" id="PS00444">
    <property type="entry name" value="POLYPRENYL_SYNTHASE_2"/>
    <property type="match status" value="1"/>
</dbReference>
<accession>O95749</accession>
<accession>A8MVQ8</accession>
<accession>Q5T2C8</accession>
<accession>Q6NW19</accession>
<protein>
    <recommendedName>
        <fullName>Geranylgeranyl pyrophosphate synthase</fullName>
        <shortName>GGPP synthase</shortName>
        <shortName>GGPPSase</shortName>
        <ecNumber>2.5.1.-</ecNumber>
    </recommendedName>
    <alternativeName>
        <fullName>(2E,6E)-farnesyl diphosphate synthase</fullName>
    </alternativeName>
    <alternativeName>
        <fullName>Dimethylallyltranstransferase</fullName>
        <ecNumber>2.5.1.1</ecNumber>
    </alternativeName>
    <alternativeName>
        <fullName>Farnesyl diphosphate synthase</fullName>
    </alternativeName>
    <alternativeName>
        <fullName>Farnesyltranstransferase</fullName>
        <ecNumber>2.5.1.29</ecNumber>
    </alternativeName>
    <alternativeName>
        <fullName>Geranylgeranyl diphosphate synthase</fullName>
    </alternativeName>
    <alternativeName>
        <fullName>Geranyltranstransferase</fullName>
        <ecNumber>2.5.1.10</ecNumber>
    </alternativeName>
</protein>
<sequence>MEKTQETVQRILLEPYKYLLQLPGKQVRTKLSQAFNHWLKVPEDKLQIIIEVTEMLHNASLLIDDIEDNSKLRRGFPVAHSIYGIPSVINSANYVYFLGLEKVLTLDHPDAVKLFTRQLLELHQGQGLDIYWRDNYTCPTEEEYKAMVLQKTGGLFGLAVGLMQLFSDYKEDLKPLLNTLGLFFQIRDDYANLHSKEYSENKSFCEDLTEGKFSFPTIHAIWSRPESTQVQNILRQRTENIDIKKYCVHYLEDVGSFEYTRNTLKELEAKAYKQIDARGGNPELVALVKHLSKMFKEENE</sequence>
<proteinExistence type="evidence at protein level"/>
<feature type="chain" id="PRO_0000123962" description="Geranylgeranyl pyrophosphate synthase">
    <location>
        <begin position="1"/>
        <end position="300"/>
    </location>
</feature>
<feature type="binding site" evidence="2">
    <location>
        <position position="25"/>
    </location>
    <ligand>
        <name>isopentenyl diphosphate</name>
        <dbReference type="ChEBI" id="CHEBI:128769"/>
    </ligand>
</feature>
<feature type="binding site" evidence="2">
    <location>
        <position position="28"/>
    </location>
    <ligand>
        <name>isopentenyl diphosphate</name>
        <dbReference type="ChEBI" id="CHEBI:128769"/>
    </ligand>
</feature>
<feature type="binding site" evidence="3">
    <location>
        <position position="57"/>
    </location>
    <ligand>
        <name>isopentenyl diphosphate</name>
        <dbReference type="ChEBI" id="CHEBI:128769"/>
    </ligand>
</feature>
<feature type="binding site" evidence="5">
    <location>
        <position position="64"/>
    </location>
    <ligand>
        <name>Mg(2+)</name>
        <dbReference type="ChEBI" id="CHEBI:18420"/>
        <label>1</label>
    </ligand>
</feature>
<feature type="binding site" evidence="5">
    <location>
        <position position="64"/>
    </location>
    <ligand>
        <name>Mg(2+)</name>
        <dbReference type="ChEBI" id="CHEBI:18420"/>
        <label>2</label>
    </ligand>
</feature>
<feature type="binding site" evidence="5">
    <location>
        <position position="68"/>
    </location>
    <ligand>
        <name>Mg(2+)</name>
        <dbReference type="ChEBI" id="CHEBI:18420"/>
        <label>1</label>
    </ligand>
</feature>
<feature type="binding site" evidence="5">
    <location>
        <position position="68"/>
    </location>
    <ligand>
        <name>Mg(2+)</name>
        <dbReference type="ChEBI" id="CHEBI:18420"/>
        <label>2</label>
    </ligand>
</feature>
<feature type="binding site">
    <location>
        <position position="73"/>
    </location>
    <ligand>
        <name>dimethylallyl diphosphate</name>
        <dbReference type="ChEBI" id="CHEBI:57623"/>
    </ligand>
</feature>
<feature type="binding site" evidence="2">
    <location>
        <position position="74"/>
    </location>
    <ligand>
        <name>isopentenyl diphosphate</name>
        <dbReference type="ChEBI" id="CHEBI:128769"/>
    </ligand>
</feature>
<feature type="binding site">
    <location>
        <position position="151"/>
    </location>
    <ligand>
        <name>dimethylallyl diphosphate</name>
        <dbReference type="ChEBI" id="CHEBI:57623"/>
    </ligand>
</feature>
<feature type="binding site">
    <location>
        <position position="152"/>
    </location>
    <ligand>
        <name>dimethylallyl diphosphate</name>
        <dbReference type="ChEBI" id="CHEBI:57623"/>
    </ligand>
</feature>
<feature type="binding site">
    <location>
        <position position="185"/>
    </location>
    <ligand>
        <name>dimethylallyl diphosphate</name>
        <dbReference type="ChEBI" id="CHEBI:57623"/>
    </ligand>
</feature>
<feature type="binding site">
    <location>
        <position position="202"/>
    </location>
    <ligand>
        <name>dimethylallyl diphosphate</name>
        <dbReference type="ChEBI" id="CHEBI:57623"/>
    </ligand>
</feature>
<feature type="binding site" evidence="1">
    <location>
        <position position="212"/>
    </location>
    <ligand>
        <name>dimethylallyl diphosphate</name>
        <dbReference type="ChEBI" id="CHEBI:57623"/>
    </ligand>
</feature>
<feature type="modified residue" description="N-acetylmethionine" evidence="10">
    <location>
        <position position="1"/>
    </location>
</feature>
<feature type="splice variant" id="VSP_056578" description="In isoform 2." evidence="8">
    <location>
        <begin position="1"/>
        <end position="54"/>
    </location>
</feature>
<feature type="sequence variant" id="VAR_086458" description="In MDHLO; uncertain significance; shows no change in farnesyltranstransferase activity." evidence="6">
    <original>P</original>
    <variation>S</variation>
    <location>
        <position position="15"/>
    </location>
</feature>
<feature type="sequence variant" id="VAR_086459" description="In MDHLO; shows slightly decreased farnesyltranstransferase activity." evidence="6">
    <original>F</original>
    <variation>C</variation>
    <location>
        <position position="257"/>
    </location>
</feature>
<feature type="sequence variant" id="VAR_086460" description="In MDHLO; shows slightly decreased farnesyltranstransferase activity." evidence="6">
    <original>Y</original>
    <variation>C</variation>
    <location>
        <position position="259"/>
    </location>
</feature>
<feature type="sequence variant" id="VAR_086461" description="In MDHLO; shows slightly decreased farnesyltranstransferase activity." evidence="6">
    <original>R</original>
    <variation>G</variation>
    <location>
        <position position="261"/>
    </location>
</feature>
<feature type="sequence variant" id="VAR_086462" description="In MDHLO; shows slightly decreased farnesyltranstransferase activity." evidence="6">
    <original>R</original>
    <variation>H</variation>
    <location>
        <position position="261"/>
    </location>
</feature>
<feature type="sequence conflict" description="In Ref. 10; AAH67768." evidence="9" ref="10">
    <original>P</original>
    <variation>Q</variation>
    <location>
        <position position="109"/>
    </location>
</feature>
<feature type="helix" evidence="13">
    <location>
        <begin position="6"/>
        <end position="21"/>
    </location>
</feature>
<feature type="helix" evidence="13">
    <location>
        <begin position="27"/>
        <end position="39"/>
    </location>
</feature>
<feature type="helix" evidence="13">
    <location>
        <begin position="43"/>
        <end position="67"/>
    </location>
</feature>
<feature type="strand" evidence="11">
    <location>
        <begin position="71"/>
        <end position="73"/>
    </location>
</feature>
<feature type="helix" evidence="13">
    <location>
        <begin position="79"/>
        <end position="83"/>
    </location>
</feature>
<feature type="helix" evidence="13">
    <location>
        <begin position="85"/>
        <end position="104"/>
    </location>
</feature>
<feature type="helix" evidence="13">
    <location>
        <begin position="111"/>
        <end position="134"/>
    </location>
</feature>
<feature type="helix" evidence="13">
    <location>
        <begin position="141"/>
        <end position="151"/>
    </location>
</feature>
<feature type="helix" evidence="13">
    <location>
        <begin position="153"/>
        <end position="164"/>
    </location>
</feature>
<feature type="helix" evidence="13">
    <location>
        <begin position="174"/>
        <end position="194"/>
    </location>
</feature>
<feature type="helix" evidence="13">
    <location>
        <begin position="206"/>
        <end position="210"/>
    </location>
</feature>
<feature type="helix" evidence="13">
    <location>
        <begin position="215"/>
        <end position="223"/>
    </location>
</feature>
<feature type="strand" evidence="12">
    <location>
        <begin position="224"/>
        <end position="226"/>
    </location>
</feature>
<feature type="helix" evidence="13">
    <location>
        <begin position="229"/>
        <end position="235"/>
    </location>
</feature>
<feature type="helix" evidence="13">
    <location>
        <begin position="241"/>
        <end position="253"/>
    </location>
</feature>
<feature type="helix" evidence="13">
    <location>
        <begin position="256"/>
        <end position="276"/>
    </location>
</feature>
<feature type="turn" evidence="13">
    <location>
        <begin position="277"/>
        <end position="279"/>
    </location>
</feature>
<feature type="helix" evidence="13">
    <location>
        <begin position="282"/>
        <end position="291"/>
    </location>
</feature>
<feature type="helix" evidence="13">
    <location>
        <begin position="292"/>
        <end position="294"/>
    </location>
</feature>
<comment type="function">
    <text evidence="6">Catalyzes the trans-addition of the three molecules of IPP onto DMAPP to form geranylgeranyl pyrophosphate, an important precursor of carotenoids and geranylated proteins.</text>
</comment>
<comment type="catalytic activity">
    <reaction evidence="5">
        <text>isopentenyl diphosphate + dimethylallyl diphosphate = (2E)-geranyl diphosphate + diphosphate</text>
        <dbReference type="Rhea" id="RHEA:22408"/>
        <dbReference type="ChEBI" id="CHEBI:33019"/>
        <dbReference type="ChEBI" id="CHEBI:57623"/>
        <dbReference type="ChEBI" id="CHEBI:58057"/>
        <dbReference type="ChEBI" id="CHEBI:128769"/>
        <dbReference type="EC" id="2.5.1.1"/>
    </reaction>
</comment>
<comment type="catalytic activity">
    <reaction evidence="5">
        <text>isopentenyl diphosphate + (2E)-geranyl diphosphate = (2E,6E)-farnesyl diphosphate + diphosphate</text>
        <dbReference type="Rhea" id="RHEA:19361"/>
        <dbReference type="ChEBI" id="CHEBI:33019"/>
        <dbReference type="ChEBI" id="CHEBI:58057"/>
        <dbReference type="ChEBI" id="CHEBI:128769"/>
        <dbReference type="ChEBI" id="CHEBI:175763"/>
        <dbReference type="EC" id="2.5.1.10"/>
    </reaction>
</comment>
<comment type="catalytic activity">
    <reaction evidence="5">
        <text>isopentenyl diphosphate + (2E,6E)-farnesyl diphosphate = (2E,6E,10E)-geranylgeranyl diphosphate + diphosphate</text>
        <dbReference type="Rhea" id="RHEA:17653"/>
        <dbReference type="ChEBI" id="CHEBI:33019"/>
        <dbReference type="ChEBI" id="CHEBI:58756"/>
        <dbReference type="ChEBI" id="CHEBI:128769"/>
        <dbReference type="ChEBI" id="CHEBI:175763"/>
        <dbReference type="EC" id="2.5.1.29"/>
    </reaction>
</comment>
<comment type="cofactor">
    <cofactor evidence="9">
        <name>Mg(2+)</name>
        <dbReference type="ChEBI" id="CHEBI:18420"/>
    </cofactor>
    <text evidence="9">Binds 3 Mg(2+) ions.</text>
</comment>
<comment type="activity regulation">
    <text evidence="5">Subject to product inhibition by geranylgeranyl diphosphate.</text>
</comment>
<comment type="biophysicochemical properties">
    <kinetics>
        <KM evidence="5">3 uM for isopentenyl diphosphate</KM>
        <KM evidence="5">4.2 uM for farnesyl diphosphate</KM>
    </kinetics>
</comment>
<comment type="pathway">
    <text>Isoprenoid biosynthesis; farnesyl diphosphate biosynthesis; farnesyl diphosphate from geranyl diphosphate and isopentenyl diphosphate: step 1/1.</text>
</comment>
<comment type="pathway">
    <text>Isoprenoid biosynthesis; geranyl diphosphate biosynthesis; geranyl diphosphate from dimethylallyl diphosphate and isopentenyl diphosphate: step 1/1.</text>
</comment>
<comment type="pathway">
    <text>Isoprenoid biosynthesis; geranylgeranyl diphosphate biosynthesis; geranylgeranyl diphosphate from farnesyl diphosphate and isopentenyl diphosphate: step 1/1.</text>
</comment>
<comment type="subunit">
    <text evidence="5">Homohexamer; trimer of homodimers.</text>
</comment>
<comment type="interaction">
    <interactant intactId="EBI-10179283">
        <id>O95749</id>
    </interactant>
    <interactant intactId="EBI-10179267">
        <id>O00244</id>
        <label>ATOX1</label>
    </interactant>
    <organismsDiffer>false</organismsDiffer>
    <experiments>3</experiments>
</comment>
<comment type="interaction">
    <interactant intactId="EBI-10179283">
        <id>O95749</id>
    </interactant>
    <interactant intactId="EBI-10179283">
        <id>O95749</id>
        <label>GGPS1</label>
    </interactant>
    <organismsDiffer>false</organismsDiffer>
    <experiments>7</experiments>
</comment>
<comment type="interaction">
    <interactant intactId="EBI-10179283">
        <id>O95749</id>
    </interactant>
    <interactant intactId="EBI-727004">
        <id>O00560</id>
        <label>SDCBP</label>
    </interactant>
    <organismsDiffer>false</organismsDiffer>
    <experiments>3</experiments>
</comment>
<comment type="subcellular location">
    <subcellularLocation>
        <location evidence="6">Cytoplasm</location>
    </subcellularLocation>
    <subcellularLocation>
        <location evidence="6">Cytoplasm</location>
        <location evidence="6">Perinuclear region</location>
    </subcellularLocation>
    <subcellularLocation>
        <location evidence="6">Cytoplasm</location>
        <location evidence="6">Myofibril</location>
        <location evidence="6">Sarcomere</location>
        <location evidence="6">Z line</location>
    </subcellularLocation>
</comment>
<comment type="alternative products">
    <event type="alternative splicing"/>
    <isoform>
        <id>O95749-1</id>
        <name>1</name>
        <sequence type="displayed"/>
    </isoform>
    <isoform>
        <id>O95749-2</id>
        <name>2</name>
        <sequence type="described" ref="VSP_056578"/>
    </isoform>
</comment>
<comment type="tissue specificity">
    <text evidence="4 6 7">Abundantly expressed in testis (PubMed:10026212, PubMed:9741684). Found in other tissues to a lower extent (PubMed:10026212, PubMed:9741684). Expressed in dermal fibroblast and skeletal muscle (PubMed:32403198).</text>
</comment>
<comment type="disease" evidence="6">
    <disease id="DI-06221">
        <name>Muscular dystrophy, congenital hearing loss, and ovarian insufficiency syndrome</name>
        <acronym>MDHLO</acronym>
        <description>An autosomal recessive disorder characterized by early-onset progressive muscle weakness, sensorineural hearing loss, and primary amenorrhea due to ovarian insufficiency. Some patients become wheelchair-bound by the second decade, whereas others have a milder phenotype and maintain independent ambulation into adulthood. Most patients have respiratory insufficiency.</description>
        <dbReference type="MIM" id="619518"/>
    </disease>
    <text>The disease is caused by variants affecting the gene represented in this entry.</text>
</comment>
<comment type="similarity">
    <text evidence="9">Belongs to the FPP/GGPP synthase family.</text>
</comment>
<name>GGPPS_HUMAN</name>
<organism>
    <name type="scientific">Homo sapiens</name>
    <name type="common">Human</name>
    <dbReference type="NCBI Taxonomy" id="9606"/>
    <lineage>
        <taxon>Eukaryota</taxon>
        <taxon>Metazoa</taxon>
        <taxon>Chordata</taxon>
        <taxon>Craniata</taxon>
        <taxon>Vertebrata</taxon>
        <taxon>Euteleostomi</taxon>
        <taxon>Mammalia</taxon>
        <taxon>Eutheria</taxon>
        <taxon>Euarchontoglires</taxon>
        <taxon>Primates</taxon>
        <taxon>Haplorrhini</taxon>
        <taxon>Catarrhini</taxon>
        <taxon>Hominidae</taxon>
        <taxon>Homo</taxon>
    </lineage>
</organism>
<keyword id="KW-0002">3D-structure</keyword>
<keyword id="KW-0007">Acetylation</keyword>
<keyword id="KW-0025">Alternative splicing</keyword>
<keyword id="KW-0912">Congenital muscular dystrophy</keyword>
<keyword id="KW-0963">Cytoplasm</keyword>
<keyword id="KW-0209">Deafness</keyword>
<keyword id="KW-0225">Disease variant</keyword>
<keyword id="KW-0414">Isoprene biosynthesis</keyword>
<keyword id="KW-0443">Lipid metabolism</keyword>
<keyword id="KW-0460">Magnesium</keyword>
<keyword id="KW-0479">Metal-binding</keyword>
<keyword id="KW-1267">Proteomics identification</keyword>
<keyword id="KW-1185">Reference proteome</keyword>
<keyword id="KW-0808">Transferase</keyword>
<reference key="1">
    <citation type="journal article" date="1998" name="J. Lipid Res.">
        <title>Human geranylgeranyl diphosphate synthase: isolation of the cDNA, chromosomal mapping and tissue expression.</title>
        <authorList>
            <person name="Ericsson J."/>
            <person name="Greene J.M."/>
            <person name="Carter K.C."/>
            <person name="Shell B.K."/>
            <person name="Duan D.R."/>
            <person name="Florence C."/>
            <person name="Edwards P.A."/>
        </authorList>
    </citation>
    <scope>NUCLEOTIDE SEQUENCE [MRNA] (ISOFORM 1)</scope>
    <source>
        <tissue>Fetal heart</tissue>
    </source>
</reference>
<reference key="2">
    <citation type="journal article" date="1999" name="J. Biol. Chem.">
        <title>Human geranylgeranyl diphosphate synthase. cDNA cloning and expression.</title>
        <authorList>
            <person name="Kuzuguchi T."/>
            <person name="Morita Y."/>
            <person name="Sagami I."/>
            <person name="Sagami H."/>
            <person name="Ogura K."/>
        </authorList>
    </citation>
    <scope>NUCLEOTIDE SEQUENCE [MRNA] (ISOFORM 1)</scope>
    <source>
        <tissue>Testis</tissue>
    </source>
</reference>
<reference key="3">
    <citation type="journal article" date="1999" name="Proc. Jpn. Conf. Biochem. Lipids">
        <title>Study on isolation of a geranylgeranyl pyrophosphate (GGPP) synthase cDNA and its expression -- development of a new assay system of gene functions.</title>
        <authorList>
            <person name="Misawa N."/>
            <person name="Okazaki H."/>
            <person name="Noguchi Y."/>
            <person name="Tatsuno I."/>
            <person name="Saito Y."/>
            <person name="Yasuda T."/>
            <person name="Hirai A."/>
        </authorList>
    </citation>
    <scope>NUCLEOTIDE SEQUENCE [MRNA] (ISOFORM 1)</scope>
</reference>
<reference key="4">
    <citation type="journal article" date="2000" name="Proc. Natl. Acad. Sci. U.S.A.">
        <title>Gene expression profiling in the human hypothalamus-pituitary-adrenal axis and full-length cDNA cloning.</title>
        <authorList>
            <person name="Hu R.-M."/>
            <person name="Han Z.-G."/>
            <person name="Song H.-D."/>
            <person name="Peng Y.-D."/>
            <person name="Huang Q.-H."/>
            <person name="Ren S.-X."/>
            <person name="Gu Y.-J."/>
            <person name="Huang C.-H."/>
            <person name="Li Y.-B."/>
            <person name="Jiang C.-L."/>
            <person name="Fu G."/>
            <person name="Zhang Q.-H."/>
            <person name="Gu B.-W."/>
            <person name="Dai M."/>
            <person name="Mao Y.-F."/>
            <person name="Gao G.-F."/>
            <person name="Rong R."/>
            <person name="Ye M."/>
            <person name="Zhou J."/>
            <person name="Xu S.-H."/>
            <person name="Gu J."/>
            <person name="Shi J.-X."/>
            <person name="Jin W.-R."/>
            <person name="Zhang C.-K."/>
            <person name="Wu T.-M."/>
            <person name="Huang G.-Y."/>
            <person name="Chen Z."/>
            <person name="Chen M.-D."/>
            <person name="Chen J.-L."/>
        </authorList>
    </citation>
    <scope>NUCLEOTIDE SEQUENCE [LARGE SCALE MRNA] (ISOFORM 1)</scope>
    <source>
        <tissue>Pituitary</tissue>
    </source>
</reference>
<reference key="5">
    <citation type="journal article" date="1999" name="Biochim. Biophys. Acta">
        <title>Identification of the GGPS1 genes encoding geranylgeranyl diphosphate synthases from mouse and human.</title>
        <authorList>
            <person name="Kainou T."/>
            <person name="Kawamura K."/>
            <person name="Tanaka K."/>
            <person name="Matsuda H."/>
            <person name="Kawamukai M."/>
        </authorList>
    </citation>
    <scope>NUCLEOTIDE SEQUENCE [MRNA] (ISOFORM 1)</scope>
    <source>
        <tissue>Liver</tissue>
        <tissue>Spleen</tissue>
    </source>
</reference>
<reference key="6">
    <citation type="submission" date="1998-04" db="EMBL/GenBank/DDBJ databases">
        <title>Molecular cloning and expression analysis of a novel human cDNA encoding a protein homologous to Neurospora crassa geranylgeranyl pyrophosphate synthetase.</title>
        <authorList>
            <person name="Zhang M."/>
            <person name="Yu L."/>
            <person name="Hu P."/>
            <person name="Bi A."/>
            <person name="Zhang Q."/>
            <person name="Xu M."/>
            <person name="Zhao S."/>
        </authorList>
    </citation>
    <scope>NUCLEOTIDE SEQUENCE [MRNA] (ISOFORM 1)</scope>
</reference>
<reference key="7">
    <citation type="journal article" date="2004" name="Nat. Genet.">
        <title>Complete sequencing and characterization of 21,243 full-length human cDNAs.</title>
        <authorList>
            <person name="Ota T."/>
            <person name="Suzuki Y."/>
            <person name="Nishikawa T."/>
            <person name="Otsuki T."/>
            <person name="Sugiyama T."/>
            <person name="Irie R."/>
            <person name="Wakamatsu A."/>
            <person name="Hayashi K."/>
            <person name="Sato H."/>
            <person name="Nagai K."/>
            <person name="Kimura K."/>
            <person name="Makita H."/>
            <person name="Sekine M."/>
            <person name="Obayashi M."/>
            <person name="Nishi T."/>
            <person name="Shibahara T."/>
            <person name="Tanaka T."/>
            <person name="Ishii S."/>
            <person name="Yamamoto J."/>
            <person name="Saito K."/>
            <person name="Kawai Y."/>
            <person name="Isono Y."/>
            <person name="Nakamura Y."/>
            <person name="Nagahari K."/>
            <person name="Murakami K."/>
            <person name="Yasuda T."/>
            <person name="Iwayanagi T."/>
            <person name="Wagatsuma M."/>
            <person name="Shiratori A."/>
            <person name="Sudo H."/>
            <person name="Hosoiri T."/>
            <person name="Kaku Y."/>
            <person name="Kodaira H."/>
            <person name="Kondo H."/>
            <person name="Sugawara M."/>
            <person name="Takahashi M."/>
            <person name="Kanda K."/>
            <person name="Yokoi T."/>
            <person name="Furuya T."/>
            <person name="Kikkawa E."/>
            <person name="Omura Y."/>
            <person name="Abe K."/>
            <person name="Kamihara K."/>
            <person name="Katsuta N."/>
            <person name="Sato K."/>
            <person name="Tanikawa M."/>
            <person name="Yamazaki M."/>
            <person name="Ninomiya K."/>
            <person name="Ishibashi T."/>
            <person name="Yamashita H."/>
            <person name="Murakawa K."/>
            <person name="Fujimori K."/>
            <person name="Tanai H."/>
            <person name="Kimata M."/>
            <person name="Watanabe M."/>
            <person name="Hiraoka S."/>
            <person name="Chiba Y."/>
            <person name="Ishida S."/>
            <person name="Ono Y."/>
            <person name="Takiguchi S."/>
            <person name="Watanabe S."/>
            <person name="Yosida M."/>
            <person name="Hotuta T."/>
            <person name="Kusano J."/>
            <person name="Kanehori K."/>
            <person name="Takahashi-Fujii A."/>
            <person name="Hara H."/>
            <person name="Tanase T.-O."/>
            <person name="Nomura Y."/>
            <person name="Togiya S."/>
            <person name="Komai F."/>
            <person name="Hara R."/>
            <person name="Takeuchi K."/>
            <person name="Arita M."/>
            <person name="Imose N."/>
            <person name="Musashino K."/>
            <person name="Yuuki H."/>
            <person name="Oshima A."/>
            <person name="Sasaki N."/>
            <person name="Aotsuka S."/>
            <person name="Yoshikawa Y."/>
            <person name="Matsunawa H."/>
            <person name="Ichihara T."/>
            <person name="Shiohata N."/>
            <person name="Sano S."/>
            <person name="Moriya S."/>
            <person name="Momiyama H."/>
            <person name="Satoh N."/>
            <person name="Takami S."/>
            <person name="Terashima Y."/>
            <person name="Suzuki O."/>
            <person name="Nakagawa S."/>
            <person name="Senoh A."/>
            <person name="Mizoguchi H."/>
            <person name="Goto Y."/>
            <person name="Shimizu F."/>
            <person name="Wakebe H."/>
            <person name="Hishigaki H."/>
            <person name="Watanabe T."/>
            <person name="Sugiyama A."/>
            <person name="Takemoto M."/>
            <person name="Kawakami B."/>
            <person name="Yamazaki M."/>
            <person name="Watanabe K."/>
            <person name="Kumagai A."/>
            <person name="Itakura S."/>
            <person name="Fukuzumi Y."/>
            <person name="Fujimori Y."/>
            <person name="Komiyama M."/>
            <person name="Tashiro H."/>
            <person name="Tanigami A."/>
            <person name="Fujiwara T."/>
            <person name="Ono T."/>
            <person name="Yamada K."/>
            <person name="Fujii Y."/>
            <person name="Ozaki K."/>
            <person name="Hirao M."/>
            <person name="Ohmori Y."/>
            <person name="Kawabata A."/>
            <person name="Hikiji T."/>
            <person name="Kobatake N."/>
            <person name="Inagaki H."/>
            <person name="Ikema Y."/>
            <person name="Okamoto S."/>
            <person name="Okitani R."/>
            <person name="Kawakami T."/>
            <person name="Noguchi S."/>
            <person name="Itoh T."/>
            <person name="Shigeta K."/>
            <person name="Senba T."/>
            <person name="Matsumura K."/>
            <person name="Nakajima Y."/>
            <person name="Mizuno T."/>
            <person name="Morinaga M."/>
            <person name="Sasaki M."/>
            <person name="Togashi T."/>
            <person name="Oyama M."/>
            <person name="Hata H."/>
            <person name="Watanabe M."/>
            <person name="Komatsu T."/>
            <person name="Mizushima-Sugano J."/>
            <person name="Satoh T."/>
            <person name="Shirai Y."/>
            <person name="Takahashi Y."/>
            <person name="Nakagawa K."/>
            <person name="Okumura K."/>
            <person name="Nagase T."/>
            <person name="Nomura N."/>
            <person name="Kikuchi H."/>
            <person name="Masuho Y."/>
            <person name="Yamashita R."/>
            <person name="Nakai K."/>
            <person name="Yada T."/>
            <person name="Nakamura Y."/>
            <person name="Ohara O."/>
            <person name="Isogai T."/>
            <person name="Sugano S."/>
        </authorList>
    </citation>
    <scope>NUCLEOTIDE SEQUENCE [LARGE SCALE MRNA] (ISOFORM 2)</scope>
</reference>
<reference key="8">
    <citation type="journal article" date="2006" name="Nature">
        <title>The DNA sequence and biological annotation of human chromosome 1.</title>
        <authorList>
            <person name="Gregory S.G."/>
            <person name="Barlow K.F."/>
            <person name="McLay K.E."/>
            <person name="Kaul R."/>
            <person name="Swarbreck D."/>
            <person name="Dunham A."/>
            <person name="Scott C.E."/>
            <person name="Howe K.L."/>
            <person name="Woodfine K."/>
            <person name="Spencer C.C.A."/>
            <person name="Jones M.C."/>
            <person name="Gillson C."/>
            <person name="Searle S."/>
            <person name="Zhou Y."/>
            <person name="Kokocinski F."/>
            <person name="McDonald L."/>
            <person name="Evans R."/>
            <person name="Phillips K."/>
            <person name="Atkinson A."/>
            <person name="Cooper R."/>
            <person name="Jones C."/>
            <person name="Hall R.E."/>
            <person name="Andrews T.D."/>
            <person name="Lloyd C."/>
            <person name="Ainscough R."/>
            <person name="Almeida J.P."/>
            <person name="Ambrose K.D."/>
            <person name="Anderson F."/>
            <person name="Andrew R.W."/>
            <person name="Ashwell R.I.S."/>
            <person name="Aubin K."/>
            <person name="Babbage A.K."/>
            <person name="Bagguley C.L."/>
            <person name="Bailey J."/>
            <person name="Beasley H."/>
            <person name="Bethel G."/>
            <person name="Bird C.P."/>
            <person name="Bray-Allen S."/>
            <person name="Brown J.Y."/>
            <person name="Brown A.J."/>
            <person name="Buckley D."/>
            <person name="Burton J."/>
            <person name="Bye J."/>
            <person name="Carder C."/>
            <person name="Chapman J.C."/>
            <person name="Clark S.Y."/>
            <person name="Clarke G."/>
            <person name="Clee C."/>
            <person name="Cobley V."/>
            <person name="Collier R.E."/>
            <person name="Corby N."/>
            <person name="Coville G.J."/>
            <person name="Davies J."/>
            <person name="Deadman R."/>
            <person name="Dunn M."/>
            <person name="Earthrowl M."/>
            <person name="Ellington A.G."/>
            <person name="Errington H."/>
            <person name="Frankish A."/>
            <person name="Frankland J."/>
            <person name="French L."/>
            <person name="Garner P."/>
            <person name="Garnett J."/>
            <person name="Gay L."/>
            <person name="Ghori M.R.J."/>
            <person name="Gibson R."/>
            <person name="Gilby L.M."/>
            <person name="Gillett W."/>
            <person name="Glithero R.J."/>
            <person name="Grafham D.V."/>
            <person name="Griffiths C."/>
            <person name="Griffiths-Jones S."/>
            <person name="Grocock R."/>
            <person name="Hammond S."/>
            <person name="Harrison E.S.I."/>
            <person name="Hart E."/>
            <person name="Haugen E."/>
            <person name="Heath P.D."/>
            <person name="Holmes S."/>
            <person name="Holt K."/>
            <person name="Howden P.J."/>
            <person name="Hunt A.R."/>
            <person name="Hunt S.E."/>
            <person name="Hunter G."/>
            <person name="Isherwood J."/>
            <person name="James R."/>
            <person name="Johnson C."/>
            <person name="Johnson D."/>
            <person name="Joy A."/>
            <person name="Kay M."/>
            <person name="Kershaw J.K."/>
            <person name="Kibukawa M."/>
            <person name="Kimberley A.M."/>
            <person name="King A."/>
            <person name="Knights A.J."/>
            <person name="Lad H."/>
            <person name="Laird G."/>
            <person name="Lawlor S."/>
            <person name="Leongamornlert D.A."/>
            <person name="Lloyd D.M."/>
            <person name="Loveland J."/>
            <person name="Lovell J."/>
            <person name="Lush M.J."/>
            <person name="Lyne R."/>
            <person name="Martin S."/>
            <person name="Mashreghi-Mohammadi M."/>
            <person name="Matthews L."/>
            <person name="Matthews N.S.W."/>
            <person name="McLaren S."/>
            <person name="Milne S."/>
            <person name="Mistry S."/>
            <person name="Moore M.J.F."/>
            <person name="Nickerson T."/>
            <person name="O'Dell C.N."/>
            <person name="Oliver K."/>
            <person name="Palmeiri A."/>
            <person name="Palmer S.A."/>
            <person name="Parker A."/>
            <person name="Patel D."/>
            <person name="Pearce A.V."/>
            <person name="Peck A.I."/>
            <person name="Pelan S."/>
            <person name="Phelps K."/>
            <person name="Phillimore B.J."/>
            <person name="Plumb R."/>
            <person name="Rajan J."/>
            <person name="Raymond C."/>
            <person name="Rouse G."/>
            <person name="Saenphimmachak C."/>
            <person name="Sehra H.K."/>
            <person name="Sheridan E."/>
            <person name="Shownkeen R."/>
            <person name="Sims S."/>
            <person name="Skuce C.D."/>
            <person name="Smith M."/>
            <person name="Steward C."/>
            <person name="Subramanian S."/>
            <person name="Sycamore N."/>
            <person name="Tracey A."/>
            <person name="Tromans A."/>
            <person name="Van Helmond Z."/>
            <person name="Wall M."/>
            <person name="Wallis J.M."/>
            <person name="White S."/>
            <person name="Whitehead S.L."/>
            <person name="Wilkinson J.E."/>
            <person name="Willey D.L."/>
            <person name="Williams H."/>
            <person name="Wilming L."/>
            <person name="Wray P.W."/>
            <person name="Wu Z."/>
            <person name="Coulson A."/>
            <person name="Vaudin M."/>
            <person name="Sulston J.E."/>
            <person name="Durbin R.M."/>
            <person name="Hubbard T."/>
            <person name="Wooster R."/>
            <person name="Dunham I."/>
            <person name="Carter N.P."/>
            <person name="McVean G."/>
            <person name="Ross M.T."/>
            <person name="Harrow J."/>
            <person name="Olson M.V."/>
            <person name="Beck S."/>
            <person name="Rogers J."/>
            <person name="Bentley D.R."/>
        </authorList>
    </citation>
    <scope>NUCLEOTIDE SEQUENCE [LARGE SCALE GENOMIC DNA]</scope>
</reference>
<reference key="9">
    <citation type="submission" date="2005-07" db="EMBL/GenBank/DDBJ databases">
        <authorList>
            <person name="Mural R.J."/>
            <person name="Istrail S."/>
            <person name="Sutton G."/>
            <person name="Florea L."/>
            <person name="Halpern A.L."/>
            <person name="Mobarry C.M."/>
            <person name="Lippert R."/>
            <person name="Walenz B."/>
            <person name="Shatkay H."/>
            <person name="Dew I."/>
            <person name="Miller J.R."/>
            <person name="Flanigan M.J."/>
            <person name="Edwards N.J."/>
            <person name="Bolanos R."/>
            <person name="Fasulo D."/>
            <person name="Halldorsson B.V."/>
            <person name="Hannenhalli S."/>
            <person name="Turner R."/>
            <person name="Yooseph S."/>
            <person name="Lu F."/>
            <person name="Nusskern D.R."/>
            <person name="Shue B.C."/>
            <person name="Zheng X.H."/>
            <person name="Zhong F."/>
            <person name="Delcher A.L."/>
            <person name="Huson D.H."/>
            <person name="Kravitz S.A."/>
            <person name="Mouchard L."/>
            <person name="Reinert K."/>
            <person name="Remington K.A."/>
            <person name="Clark A.G."/>
            <person name="Waterman M.S."/>
            <person name="Eichler E.E."/>
            <person name="Adams M.D."/>
            <person name="Hunkapiller M.W."/>
            <person name="Myers E.W."/>
            <person name="Venter J.C."/>
        </authorList>
    </citation>
    <scope>NUCLEOTIDE SEQUENCE [LARGE SCALE GENOMIC DNA]</scope>
</reference>
<reference key="10">
    <citation type="journal article" date="2004" name="Genome Res.">
        <title>The status, quality, and expansion of the NIH full-length cDNA project: the Mammalian Gene Collection (MGC).</title>
        <authorList>
            <consortium name="The MGC Project Team"/>
        </authorList>
    </citation>
    <scope>NUCLEOTIDE SEQUENCE [LARGE SCALE MRNA] (ISOFORM 1)</scope>
    <source>
        <tissue>Kidney</tissue>
        <tissue>Testis</tissue>
    </source>
</reference>
<reference key="11">
    <citation type="journal article" date="2011" name="BMC Syst. Biol.">
        <title>Initial characterization of the human central proteome.</title>
        <authorList>
            <person name="Burkard T.R."/>
            <person name="Planyavsky M."/>
            <person name="Kaupe I."/>
            <person name="Breitwieser F.P."/>
            <person name="Buerckstuemmer T."/>
            <person name="Bennett K.L."/>
            <person name="Superti-Furga G."/>
            <person name="Colinge J."/>
        </authorList>
    </citation>
    <scope>IDENTIFICATION BY MASS SPECTROMETRY [LARGE SCALE ANALYSIS]</scope>
</reference>
<reference key="12">
    <citation type="journal article" date="2012" name="Proc. Natl. Acad. Sci. U.S.A.">
        <title>N-terminal acetylome analyses and functional insights of the N-terminal acetyltransferase NatB.</title>
        <authorList>
            <person name="Van Damme P."/>
            <person name="Lasa M."/>
            <person name="Polevoda B."/>
            <person name="Gazquez C."/>
            <person name="Elosegui-Artola A."/>
            <person name="Kim D.S."/>
            <person name="De Juan-Pardo E."/>
            <person name="Demeyer K."/>
            <person name="Hole K."/>
            <person name="Larrea E."/>
            <person name="Timmerman E."/>
            <person name="Prieto J."/>
            <person name="Arnesen T."/>
            <person name="Sherman F."/>
            <person name="Gevaert K."/>
            <person name="Aldabe R."/>
        </authorList>
    </citation>
    <scope>ACETYLATION [LARGE SCALE ANALYSIS] AT MET-1</scope>
    <scope>IDENTIFICATION BY MASS SPECTROMETRY [LARGE SCALE ANALYSIS]</scope>
</reference>
<reference key="13">
    <citation type="journal article" date="2020" name="Ann. Neurol.">
        <title>GGPS1 Mutations Cause Muscular Dystrophy/Hearing Loss/Ovarian Insufficiency Syndrome.</title>
        <authorList>
            <person name="Foley A.R."/>
            <person name="Zou Y."/>
            <person name="Dunford J.E."/>
            <person name="Rooney J."/>
            <person name="Chandra G."/>
            <person name="Xiong H."/>
            <person name="Straub V."/>
            <person name="Voit T."/>
            <person name="Romero N."/>
            <person name="Donkervoort S."/>
            <person name="Hu Y."/>
            <person name="Markello T."/>
            <person name="Horn A."/>
            <person name="Qebibo L."/>
            <person name="Dastgir J."/>
            <person name="Meilleur K.G."/>
            <person name="Finkel R.S."/>
            <person name="Fan Y."/>
            <person name="Mamchaoui K."/>
            <person name="Duguez S."/>
            <person name="Nelson I."/>
            <person name="Laporte J."/>
            <person name="Santi M."/>
            <person name="Malfatti E."/>
            <person name="Maisonobe T."/>
            <person name="Touraine P."/>
            <person name="Hirano M."/>
            <person name="Hughes I."/>
            <person name="Bushby K."/>
            <person name="Oppermann U."/>
            <person name="Boehm J."/>
            <person name="Jaiswal J.K."/>
            <person name="Stojkovic T."/>
            <person name="Boennemann C.G."/>
        </authorList>
    </citation>
    <scope>INVOLVEMENT IN MDHLO</scope>
    <scope>VARIANTS MDHLO SER-15; CYS-257; CYS-259; GLY-261 AND HIS-261</scope>
    <scope>CHARACTERIZATION OF VARIANTS MDHLO SER-15; CYS-257; CYS-259; GLY-261 AND HIS-261</scope>
    <scope>FUNCTION</scope>
    <scope>SUBCELLULAR LOCATION</scope>
    <scope>TISSUE SPECIFICITY</scope>
</reference>
<reference key="14">
    <citation type="journal article" date="2006" name="J. Biol. Chem.">
        <title>The crystal structure of human geranylgeranyl pyrophosphate synthase reveals a novel hexameric arrangement and inhibitory product binding.</title>
        <authorList>
            <person name="Kavanagh K.L."/>
            <person name="Dunford J.E."/>
            <person name="Bunkoczi G."/>
            <person name="Russell R.G."/>
            <person name="Oppermann U."/>
        </authorList>
    </citation>
    <scope>X-RAY CRYSTALLOGRAPHY (2.7 ANGSTROMS) IN COMPLEX WITH MAGNESIUM AND GERANYLGERANYL PHOSPHATE</scope>
    <scope>CATALYTIC ACTIVITY</scope>
    <scope>BIOPHYSICOCHEMICAL PROPERTIES</scope>
    <scope>ACTIVITY REGULATION</scope>
    <scope>SUBUNIT</scope>
</reference>
<gene>
    <name type="primary">GGPS1</name>
</gene>